<keyword id="KW-0963">Cytoplasm</keyword>
<keyword id="KW-0489">Methyltransferase</keyword>
<keyword id="KW-0949">S-adenosyl-L-methionine</keyword>
<keyword id="KW-0808">Transferase</keyword>
<keyword id="KW-0819">tRNA processing</keyword>
<name>TRMD_BACAC</name>
<dbReference type="EC" id="2.1.1.228" evidence="1"/>
<dbReference type="EMBL" id="CP001215">
    <property type="protein sequence ID" value="ACP14110.1"/>
    <property type="molecule type" value="Genomic_DNA"/>
</dbReference>
<dbReference type="RefSeq" id="WP_000686892.1">
    <property type="nucleotide sequence ID" value="NC_012581.1"/>
</dbReference>
<dbReference type="SMR" id="C3L786"/>
<dbReference type="GeneID" id="93007271"/>
<dbReference type="KEGG" id="bah:BAMEG_0652"/>
<dbReference type="HOGENOM" id="CLU_047363_0_1_9"/>
<dbReference type="GO" id="GO:0005829">
    <property type="term" value="C:cytosol"/>
    <property type="evidence" value="ECO:0007669"/>
    <property type="project" value="TreeGrafter"/>
</dbReference>
<dbReference type="GO" id="GO:0052906">
    <property type="term" value="F:tRNA (guanine(37)-N1)-methyltransferase activity"/>
    <property type="evidence" value="ECO:0007669"/>
    <property type="project" value="UniProtKB-UniRule"/>
</dbReference>
<dbReference type="GO" id="GO:0002939">
    <property type="term" value="P:tRNA N1-guanine methylation"/>
    <property type="evidence" value="ECO:0007669"/>
    <property type="project" value="TreeGrafter"/>
</dbReference>
<dbReference type="CDD" id="cd18080">
    <property type="entry name" value="TrmD-like"/>
    <property type="match status" value="1"/>
</dbReference>
<dbReference type="FunFam" id="1.10.1270.20:FF:000001">
    <property type="entry name" value="tRNA (guanine-N(1)-)-methyltransferase"/>
    <property type="match status" value="1"/>
</dbReference>
<dbReference type="FunFam" id="3.40.1280.10:FF:000001">
    <property type="entry name" value="tRNA (guanine-N(1)-)-methyltransferase"/>
    <property type="match status" value="1"/>
</dbReference>
<dbReference type="Gene3D" id="3.40.1280.10">
    <property type="match status" value="1"/>
</dbReference>
<dbReference type="Gene3D" id="1.10.1270.20">
    <property type="entry name" value="tRNA(m1g37)methyltransferase, domain 2"/>
    <property type="match status" value="1"/>
</dbReference>
<dbReference type="HAMAP" id="MF_00605">
    <property type="entry name" value="TrmD"/>
    <property type="match status" value="1"/>
</dbReference>
<dbReference type="InterPro" id="IPR029028">
    <property type="entry name" value="Alpha/beta_knot_MTases"/>
</dbReference>
<dbReference type="InterPro" id="IPR023148">
    <property type="entry name" value="tRNA_m1G_MeTrfase_C_sf"/>
</dbReference>
<dbReference type="InterPro" id="IPR002649">
    <property type="entry name" value="tRNA_m1G_MeTrfase_TrmD"/>
</dbReference>
<dbReference type="InterPro" id="IPR029026">
    <property type="entry name" value="tRNA_m1G_MTases_N"/>
</dbReference>
<dbReference type="InterPro" id="IPR016009">
    <property type="entry name" value="tRNA_MeTrfase_TRMD/TRM10"/>
</dbReference>
<dbReference type="NCBIfam" id="NF000648">
    <property type="entry name" value="PRK00026.1"/>
    <property type="match status" value="1"/>
</dbReference>
<dbReference type="NCBIfam" id="TIGR00088">
    <property type="entry name" value="trmD"/>
    <property type="match status" value="1"/>
</dbReference>
<dbReference type="PANTHER" id="PTHR46417">
    <property type="entry name" value="TRNA (GUANINE-N(1)-)-METHYLTRANSFERASE"/>
    <property type="match status" value="1"/>
</dbReference>
<dbReference type="PANTHER" id="PTHR46417:SF1">
    <property type="entry name" value="TRNA (GUANINE-N(1)-)-METHYLTRANSFERASE"/>
    <property type="match status" value="1"/>
</dbReference>
<dbReference type="Pfam" id="PF01746">
    <property type="entry name" value="tRNA_m1G_MT"/>
    <property type="match status" value="1"/>
</dbReference>
<dbReference type="PIRSF" id="PIRSF000386">
    <property type="entry name" value="tRNA_mtase"/>
    <property type="match status" value="1"/>
</dbReference>
<dbReference type="SUPFAM" id="SSF75217">
    <property type="entry name" value="alpha/beta knot"/>
    <property type="match status" value="1"/>
</dbReference>
<comment type="function">
    <text evidence="1">Specifically methylates guanosine-37 in various tRNAs.</text>
</comment>
<comment type="catalytic activity">
    <reaction evidence="1">
        <text>guanosine(37) in tRNA + S-adenosyl-L-methionine = N(1)-methylguanosine(37) in tRNA + S-adenosyl-L-homocysteine + H(+)</text>
        <dbReference type="Rhea" id="RHEA:36899"/>
        <dbReference type="Rhea" id="RHEA-COMP:10145"/>
        <dbReference type="Rhea" id="RHEA-COMP:10147"/>
        <dbReference type="ChEBI" id="CHEBI:15378"/>
        <dbReference type="ChEBI" id="CHEBI:57856"/>
        <dbReference type="ChEBI" id="CHEBI:59789"/>
        <dbReference type="ChEBI" id="CHEBI:73542"/>
        <dbReference type="ChEBI" id="CHEBI:74269"/>
        <dbReference type="EC" id="2.1.1.228"/>
    </reaction>
</comment>
<comment type="subunit">
    <text evidence="1">Homodimer.</text>
</comment>
<comment type="subcellular location">
    <subcellularLocation>
        <location evidence="1">Cytoplasm</location>
    </subcellularLocation>
</comment>
<comment type="similarity">
    <text evidence="1">Belongs to the RNA methyltransferase TrmD family.</text>
</comment>
<reference key="1">
    <citation type="submission" date="2008-10" db="EMBL/GenBank/DDBJ databases">
        <title>Genome sequence of Bacillus anthracis str. CDC 684.</title>
        <authorList>
            <person name="Dodson R.J."/>
            <person name="Munk A.C."/>
            <person name="Brettin T."/>
            <person name="Bruce D."/>
            <person name="Detter C."/>
            <person name="Tapia R."/>
            <person name="Han C."/>
            <person name="Sutton G."/>
            <person name="Sims D."/>
        </authorList>
    </citation>
    <scope>NUCLEOTIDE SEQUENCE [LARGE SCALE GENOMIC DNA]</scope>
    <source>
        <strain>CDC 684 / NRRL 3495</strain>
    </source>
</reference>
<evidence type="ECO:0000255" key="1">
    <source>
        <dbReference type="HAMAP-Rule" id="MF_00605"/>
    </source>
</evidence>
<feature type="chain" id="PRO_1000147070" description="tRNA (guanine-N(1)-)-methyltransferase">
    <location>
        <begin position="1"/>
        <end position="244"/>
    </location>
</feature>
<feature type="binding site" evidence="1">
    <location>
        <position position="113"/>
    </location>
    <ligand>
        <name>S-adenosyl-L-methionine</name>
        <dbReference type="ChEBI" id="CHEBI:59789"/>
    </ligand>
</feature>
<feature type="binding site" evidence="1">
    <location>
        <begin position="133"/>
        <end position="138"/>
    </location>
    <ligand>
        <name>S-adenosyl-L-methionine</name>
        <dbReference type="ChEBI" id="CHEBI:59789"/>
    </ligand>
</feature>
<protein>
    <recommendedName>
        <fullName evidence="1">tRNA (guanine-N(1)-)-methyltransferase</fullName>
        <ecNumber evidence="1">2.1.1.228</ecNumber>
    </recommendedName>
    <alternativeName>
        <fullName evidence="1">M1G-methyltransferase</fullName>
    </alternativeName>
    <alternativeName>
        <fullName evidence="1">tRNA [GM37] methyltransferase</fullName>
    </alternativeName>
</protein>
<organism>
    <name type="scientific">Bacillus anthracis (strain CDC 684 / NRRL 3495)</name>
    <dbReference type="NCBI Taxonomy" id="568206"/>
    <lineage>
        <taxon>Bacteria</taxon>
        <taxon>Bacillati</taxon>
        <taxon>Bacillota</taxon>
        <taxon>Bacilli</taxon>
        <taxon>Bacillales</taxon>
        <taxon>Bacillaceae</taxon>
        <taxon>Bacillus</taxon>
        <taxon>Bacillus cereus group</taxon>
    </lineage>
</organism>
<accession>C3L786</accession>
<proteinExistence type="inferred from homology"/>
<gene>
    <name evidence="1" type="primary">trmD</name>
    <name type="ordered locus">BAMEG_0652</name>
</gene>
<sequence>MKIDILTLFPDMFTGVFGSSILKKAQEKEAVELRVVNFRDYTTSKHNSVDDYPYGGGAGMVLTPQPIFDAVEDLTKETERKPRVVLMCPQGERFTQKKAEELAEEEHLIFVCGHYEGYDERIREHLVTDEISIGDYVLTGGELASMVITDSVVRLLPGVLGNHASQVEDSFSTGLLEHPHYTRPADFRGMKVPDVLMSGNHKNIDEWRHKESLRRTYTRRPDLLEERELSKQEKKWLEQIKEGK</sequence>